<name>SEL10_CAEEL</name>
<organism>
    <name type="scientific">Caenorhabditis elegans</name>
    <dbReference type="NCBI Taxonomy" id="6239"/>
    <lineage>
        <taxon>Eukaryota</taxon>
        <taxon>Metazoa</taxon>
        <taxon>Ecdysozoa</taxon>
        <taxon>Nematoda</taxon>
        <taxon>Chromadorea</taxon>
        <taxon>Rhabditida</taxon>
        <taxon>Rhabditina</taxon>
        <taxon>Rhabditomorpha</taxon>
        <taxon>Rhabditoidea</taxon>
        <taxon>Rhabditidae</taxon>
        <taxon>Peloderinae</taxon>
        <taxon>Caenorhabditis</taxon>
    </lineage>
</organism>
<evidence type="ECO:0000255" key="1">
    <source>
        <dbReference type="PROSITE-ProRule" id="PRU00080"/>
    </source>
</evidence>
<evidence type="ECO:0000256" key="2">
    <source>
        <dbReference type="SAM" id="MobiDB-lite"/>
    </source>
</evidence>
<evidence type="ECO:0000269" key="3">
    <source>
    </source>
</evidence>
<evidence type="ECO:0000269" key="4">
    <source>
    </source>
</evidence>
<evidence type="ECO:0000269" key="5">
    <source>
    </source>
</evidence>
<evidence type="ECO:0000269" key="6">
    <source>
    </source>
</evidence>
<evidence type="ECO:0000269" key="7">
    <source>
    </source>
</evidence>
<evidence type="ECO:0000269" key="8">
    <source>
    </source>
</evidence>
<evidence type="ECO:0000269" key="9">
    <source>
    </source>
</evidence>
<evidence type="ECO:0000269" key="10">
    <source>
    </source>
</evidence>
<evidence type="ECO:0000269" key="11">
    <source>
    </source>
</evidence>
<evidence type="ECO:0000303" key="12">
    <source>
    </source>
</evidence>
<evidence type="ECO:0000305" key="13"/>
<evidence type="ECO:0000312" key="14">
    <source>
        <dbReference type="WormBase" id="F55B12.3a"/>
    </source>
</evidence>
<feature type="chain" id="PRO_0000051212" description="F-box/WD repeat-containing protein sel-10">
    <location>
        <begin position="1"/>
        <end position="587"/>
    </location>
</feature>
<feature type="domain" description="F-box" evidence="1">
    <location>
        <begin position="121"/>
        <end position="167"/>
    </location>
</feature>
<feature type="repeat" description="WD 1">
    <location>
        <begin position="253"/>
        <end position="291"/>
    </location>
</feature>
<feature type="repeat" description="WD 2">
    <location>
        <begin position="294"/>
        <end position="333"/>
    </location>
</feature>
<feature type="repeat" description="WD 3">
    <location>
        <begin position="336"/>
        <end position="373"/>
    </location>
</feature>
<feature type="repeat" description="WD 4">
    <location>
        <begin position="376"/>
        <end position="415"/>
    </location>
</feature>
<feature type="repeat" description="WD 5">
    <location>
        <begin position="416"/>
        <end position="455"/>
    </location>
</feature>
<feature type="repeat" description="WD 6">
    <location>
        <begin position="461"/>
        <end position="498"/>
    </location>
</feature>
<feature type="repeat" description="WD 7">
    <location>
        <begin position="501"/>
        <end position="539"/>
    </location>
</feature>
<feature type="region of interest" description="Disordered" evidence="2">
    <location>
        <begin position="1"/>
        <end position="53"/>
    </location>
</feature>
<feature type="compositionally biased region" description="Basic and acidic residues" evidence="2">
    <location>
        <begin position="1"/>
        <end position="11"/>
    </location>
</feature>
<feature type="compositionally biased region" description="Acidic residues" evidence="2">
    <location>
        <begin position="17"/>
        <end position="34"/>
    </location>
</feature>
<feature type="compositionally biased region" description="Low complexity" evidence="2">
    <location>
        <begin position="35"/>
        <end position="47"/>
    </location>
</feature>
<feature type="splice variant" id="VSP_009813" description="In isoform b." evidence="13">
    <location>
        <begin position="54"/>
        <end position="55"/>
    </location>
</feature>
<feature type="mutagenesis site" description="In n1074; masculinizing phenotype. Does not self-interact in vitro or bind to skr-1 protein." evidence="5">
    <original>G</original>
    <variation>E</variation>
    <location>
        <position position="567"/>
    </location>
</feature>
<gene>
    <name evidence="14" type="primary">sel-10</name>
    <name evidence="14" type="synonym">egl-41</name>
    <name evidence="14" type="ORF">F55B12.3</name>
</gene>
<keyword id="KW-0025">Alternative splicing</keyword>
<keyword id="KW-0966">Cell projection</keyword>
<keyword id="KW-0963">Cytoplasm</keyword>
<keyword id="KW-0217">Developmental protein</keyword>
<keyword id="KW-0221">Differentiation</keyword>
<keyword id="KW-1185">Reference proteome</keyword>
<keyword id="KW-0677">Repeat</keyword>
<keyword id="KW-0726">Sexual differentiation</keyword>
<keyword id="KW-0833">Ubl conjugation pathway</keyword>
<keyword id="KW-0853">WD repeat</keyword>
<reference key="1">
    <citation type="journal article" date="1997" name="Genes Dev.">
        <title>sel-10, a negative regulator of lin-12 activity in Caenorhabditis elegans, encodes a member of the CDC4 family of proteins.</title>
        <authorList>
            <person name="Hubbard E.J.A."/>
            <person name="Wu G."/>
            <person name="Kitajewski J."/>
            <person name="Greenwald I."/>
        </authorList>
    </citation>
    <scope>NUCLEOTIDE SEQUENCE [MRNA] (ISOFORM A)</scope>
    <scope>FUNCTION</scope>
    <scope>INTERACTION WITH LIN-12</scope>
</reference>
<reference key="2">
    <citation type="journal article" date="1998" name="Science">
        <title>Genome sequence of the nematode C. elegans: a platform for investigating biology.</title>
        <authorList>
            <consortium name="The C. elegans sequencing consortium"/>
        </authorList>
    </citation>
    <scope>NUCLEOTIDE SEQUENCE [LARGE SCALE GENOMIC DNA]</scope>
    <scope>ALTERNATIVE SPLICING</scope>
    <source>
        <strain>Bristol N2</strain>
    </source>
</reference>
<reference key="3">
    <citation type="journal article" date="1993" name="Genetics">
        <title>Suppressors of a lin-12 hypomorph define genes that interact with both lin-12 and glp-1 in Caenorhabditis elegans.</title>
        <authorList>
            <person name="Sundaram M."/>
            <person name="Greenwald I."/>
        </authorList>
    </citation>
    <scope>FUNCTION</scope>
    <scope>DISRUPTION PHENOTYPE</scope>
</reference>
<reference key="4">
    <citation type="journal article" date="1998" name="Proc. Natl. Acad. Sci. U.S.A.">
        <title>Evidence for functional and physical association between Caenorhabditis elegans SEL-10, a Cdc4p-related protein, and SEL-12 presenilin.</title>
        <authorList>
            <person name="Wu G."/>
            <person name="Hubbard E.J.A."/>
            <person name="Kitajewski J.K."/>
            <person name="Greenwald I."/>
        </authorList>
    </citation>
    <scope>FUNCTION</scope>
    <scope>INTERACTION WITH GLP-1 AND SEL-12</scope>
</reference>
<reference key="5">
    <citation type="journal article" date="2004" name="Proc. Natl. Acad. Sci. U.S.A.">
        <title>The Caenorhabditis elegans F-box protein SEL-10 promotes female development and may target FEM-1 and FEM-3 for degradation by the proteasome.</title>
        <authorList>
            <person name="Jaeger S."/>
            <person name="Schwartz H.T."/>
            <person name="Horvitz H.R."/>
            <person name="Conradt B."/>
        </authorList>
    </citation>
    <scope>FUNCTION</scope>
    <scope>INTERACTION WITH FEM-1; FEM-2 AND FEM-3</scope>
</reference>
<reference key="6">
    <citation type="journal article" date="2007" name="Science">
        <title>Spatial regulation of an E3 ubiquitin ligase directs selective synapse elimination.</title>
        <authorList>
            <person name="Ding M."/>
            <person name="Chao D."/>
            <person name="Wang G."/>
            <person name="Shen K."/>
        </authorList>
    </citation>
    <scope>FUNCTION</scope>
    <scope>SUBUNIT</scope>
    <scope>SUBCELLULAR LOCATION</scope>
    <scope>DEVELOPMENTAL STAGE</scope>
</reference>
<reference key="7">
    <citation type="journal article" date="2008" name="Dev. Biol.">
        <title>SKR-1, a homolog of Skp1 and a member of the SCF(SEL-10) complex, regulates sex-determination and LIN-12/Notch signaling in C. elegans.</title>
        <authorList>
            <person name="Killian D.J."/>
            <person name="Harvey E."/>
            <person name="Johnson P."/>
            <person name="Otori M."/>
            <person name="Mitani S."/>
            <person name="Xue D."/>
        </authorList>
    </citation>
    <scope>FUNCTION</scope>
    <scope>INTERACTION WITH SKR-1</scope>
    <scope>MUTAGENESIS OF GLY-567</scope>
</reference>
<reference key="8">
    <citation type="journal article" date="2009" name="Genetics">
        <title>Using RNA interference to identify specific modifiers of a temperature-sensitive, embryonic-lethal mutation in the Caenorhabditis elegans ubiquitin-like Nedd8 protein modification pathway E1-activating gene rfl-1.</title>
        <authorList>
            <person name="Dorfman M."/>
            <person name="Gomes J.E."/>
            <person name="O'Rourke S."/>
            <person name="Bowerman B."/>
        </authorList>
    </citation>
    <scope>SUBCELLULAR LOCATION</scope>
    <scope>TISSUE SPECIFICITY</scope>
    <scope>DEVELOPMENTAL STAGE</scope>
</reference>
<reference key="9">
    <citation type="journal article" date="2012" name="J. Cell Sci.">
        <title>The C. elegans F-box proteins LIN-23 and SEL-10 antagonize centrosome duplication by regulating ZYG-1 levels.</title>
        <authorList>
            <person name="Peel N."/>
            <person name="Dougherty M."/>
            <person name="Goeres J."/>
            <person name="Liu Y."/>
            <person name="O'Connell K.F."/>
        </authorList>
    </citation>
    <scope>FUNCTION</scope>
    <scope>INTERACTION WITH ZYG-1</scope>
    <scope>DISRUPTION PHENOTYPE</scope>
</reference>
<reference key="10">
    <citation type="journal article" date="2012" name="Genes Dev.">
        <title>SEL-10/Fbw7-dependent negative feedback regulation of LIN-45/Braf signaling in C. elegans via a conserved phosphodegron.</title>
        <authorList>
            <person name="de la Cova C."/>
            <person name="Greenwald I."/>
        </authorList>
    </citation>
    <scope>FUNCTION</scope>
</reference>
<dbReference type="EMBL" id="AF020788">
    <property type="protein sequence ID" value="AAC47809.1"/>
    <property type="molecule type" value="mRNA"/>
</dbReference>
<dbReference type="EMBL" id="Z79757">
    <property type="protein sequence ID" value="CAB02129.2"/>
    <property type="molecule type" value="Genomic_DNA"/>
</dbReference>
<dbReference type="EMBL" id="Z79757">
    <property type="protein sequence ID" value="CAC42307.1"/>
    <property type="molecule type" value="Genomic_DNA"/>
</dbReference>
<dbReference type="PIR" id="T22703">
    <property type="entry name" value="T22703"/>
</dbReference>
<dbReference type="RefSeq" id="NP_001023975.1">
    <molecule id="Q93794-2"/>
    <property type="nucleotide sequence ID" value="NM_001028804.5"/>
</dbReference>
<dbReference type="RefSeq" id="NP_506421.1">
    <molecule id="Q93794-1"/>
    <property type="nucleotide sequence ID" value="NM_074020.8"/>
</dbReference>
<dbReference type="SMR" id="Q93794"/>
<dbReference type="BioGRID" id="44892">
    <property type="interactions" value="18"/>
</dbReference>
<dbReference type="FunCoup" id="Q93794">
    <property type="interactions" value="2096"/>
</dbReference>
<dbReference type="IntAct" id="Q93794">
    <property type="interactions" value="11"/>
</dbReference>
<dbReference type="MINT" id="Q93794"/>
<dbReference type="STRING" id="6239.F55B12.3a.1"/>
<dbReference type="iPTMnet" id="Q93794"/>
<dbReference type="PaxDb" id="6239-F55B12.3a"/>
<dbReference type="PeptideAtlas" id="Q93794"/>
<dbReference type="EnsemblMetazoa" id="F55B12.3a.1">
    <molecule id="Q93794-1"/>
    <property type="protein sequence ID" value="F55B12.3a.1"/>
    <property type="gene ID" value="WBGene00004767"/>
</dbReference>
<dbReference type="EnsemblMetazoa" id="F55B12.3b.1">
    <molecule id="Q93794-2"/>
    <property type="protein sequence ID" value="F55B12.3b.1"/>
    <property type="gene ID" value="WBGene00004767"/>
</dbReference>
<dbReference type="GeneID" id="179878"/>
<dbReference type="KEGG" id="cel:CELE_F55B12.3"/>
<dbReference type="UCSC" id="F55B12.3b.1">
    <molecule id="Q93794-1"/>
    <property type="organism name" value="c. elegans"/>
</dbReference>
<dbReference type="AGR" id="WB:WBGene00004767"/>
<dbReference type="CTD" id="179878"/>
<dbReference type="WormBase" id="F55B12.3a">
    <molecule id="Q93794-1"/>
    <property type="protein sequence ID" value="CE25007"/>
    <property type="gene ID" value="WBGene00004767"/>
    <property type="gene designation" value="sel-10"/>
</dbReference>
<dbReference type="WormBase" id="F55B12.3b">
    <molecule id="Q93794-2"/>
    <property type="protein sequence ID" value="CE27762"/>
    <property type="gene ID" value="WBGene00004767"/>
    <property type="gene designation" value="sel-10"/>
</dbReference>
<dbReference type="eggNOG" id="KOG0274">
    <property type="taxonomic scope" value="Eukaryota"/>
</dbReference>
<dbReference type="GeneTree" id="ENSGT00940000174696"/>
<dbReference type="InParanoid" id="Q93794"/>
<dbReference type="OMA" id="QISQCGR"/>
<dbReference type="OrthoDB" id="5853810at2759"/>
<dbReference type="PhylomeDB" id="Q93794"/>
<dbReference type="Reactome" id="R-CEL-983168">
    <property type="pathway name" value="Antigen processing: Ubiquitination &amp; Proteasome degradation"/>
</dbReference>
<dbReference type="SignaLink" id="Q93794"/>
<dbReference type="PRO" id="PR:Q93794"/>
<dbReference type="Proteomes" id="UP000001940">
    <property type="component" value="Chromosome V"/>
</dbReference>
<dbReference type="Bgee" id="WBGene00004767">
    <property type="expression patterns" value="Expressed in germ line (C elegans) and 4 other cell types or tissues"/>
</dbReference>
<dbReference type="GO" id="GO:0030424">
    <property type="term" value="C:axon"/>
    <property type="evidence" value="ECO:0000314"/>
    <property type="project" value="UniProtKB"/>
</dbReference>
<dbReference type="GO" id="GO:0005737">
    <property type="term" value="C:cytoplasm"/>
    <property type="evidence" value="ECO:0000314"/>
    <property type="project" value="WormBase"/>
</dbReference>
<dbReference type="GO" id="GO:0042803">
    <property type="term" value="F:protein homodimerization activity"/>
    <property type="evidence" value="ECO:0000353"/>
    <property type="project" value="UniProtKB"/>
</dbReference>
<dbReference type="GO" id="GO:0019901">
    <property type="term" value="F:protein kinase binding"/>
    <property type="evidence" value="ECO:0000353"/>
    <property type="project" value="UniProtKB"/>
</dbReference>
<dbReference type="GO" id="GO:0030154">
    <property type="term" value="P:cell differentiation"/>
    <property type="evidence" value="ECO:0007669"/>
    <property type="project" value="UniProtKB-KW"/>
</dbReference>
<dbReference type="GO" id="GO:0046660">
    <property type="term" value="P:female sex differentiation"/>
    <property type="evidence" value="ECO:0000315"/>
    <property type="project" value="UniProtKB"/>
</dbReference>
<dbReference type="GO" id="GO:0010826">
    <property type="term" value="P:negative regulation of centrosome duplication"/>
    <property type="evidence" value="ECO:0000315"/>
    <property type="project" value="UniProtKB"/>
</dbReference>
<dbReference type="GO" id="GO:0045746">
    <property type="term" value="P:negative regulation of Notch signaling pathway"/>
    <property type="evidence" value="ECO:0000316"/>
    <property type="project" value="UniProtKB"/>
</dbReference>
<dbReference type="GO" id="GO:0008593">
    <property type="term" value="P:regulation of Notch signaling pathway"/>
    <property type="evidence" value="ECO:0000316"/>
    <property type="project" value="WormBase"/>
</dbReference>
<dbReference type="GO" id="GO:0031647">
    <property type="term" value="P:regulation of protein stability"/>
    <property type="evidence" value="ECO:0000315"/>
    <property type="project" value="UniProtKB"/>
</dbReference>
<dbReference type="GO" id="GO:0040028">
    <property type="term" value="P:regulation of vulval development"/>
    <property type="evidence" value="ECO:0000315"/>
    <property type="project" value="UniProtKB"/>
</dbReference>
<dbReference type="CDD" id="cd00200">
    <property type="entry name" value="WD40"/>
    <property type="match status" value="1"/>
</dbReference>
<dbReference type="FunFam" id="2.130.10.10:FF:000032">
    <property type="entry name" value="F-box/WD repeat-containing protein 7 isoform X1"/>
    <property type="match status" value="1"/>
</dbReference>
<dbReference type="Gene3D" id="1.20.1280.50">
    <property type="match status" value="1"/>
</dbReference>
<dbReference type="Gene3D" id="2.130.10.10">
    <property type="entry name" value="YVTN repeat-like/Quinoprotein amine dehydrogenase"/>
    <property type="match status" value="1"/>
</dbReference>
<dbReference type="InterPro" id="IPR036047">
    <property type="entry name" value="F-box-like_dom_sf"/>
</dbReference>
<dbReference type="InterPro" id="IPR001810">
    <property type="entry name" value="F-box_dom"/>
</dbReference>
<dbReference type="InterPro" id="IPR020472">
    <property type="entry name" value="G-protein_beta_WD-40_rep"/>
</dbReference>
<dbReference type="InterPro" id="IPR015943">
    <property type="entry name" value="WD40/YVTN_repeat-like_dom_sf"/>
</dbReference>
<dbReference type="InterPro" id="IPR019775">
    <property type="entry name" value="WD40_repeat_CS"/>
</dbReference>
<dbReference type="InterPro" id="IPR036322">
    <property type="entry name" value="WD40_repeat_dom_sf"/>
</dbReference>
<dbReference type="InterPro" id="IPR001680">
    <property type="entry name" value="WD40_rpt"/>
</dbReference>
<dbReference type="PANTHER" id="PTHR19849">
    <property type="entry name" value="PHOSPHOLIPASE A-2-ACTIVATING PROTEIN"/>
    <property type="match status" value="1"/>
</dbReference>
<dbReference type="PANTHER" id="PTHR19849:SF0">
    <property type="entry name" value="PHOSPHOLIPASE A-2-ACTIVATING PROTEIN"/>
    <property type="match status" value="1"/>
</dbReference>
<dbReference type="Pfam" id="PF12937">
    <property type="entry name" value="F-box-like"/>
    <property type="match status" value="1"/>
</dbReference>
<dbReference type="Pfam" id="PF00400">
    <property type="entry name" value="WD40"/>
    <property type="match status" value="7"/>
</dbReference>
<dbReference type="PRINTS" id="PR00320">
    <property type="entry name" value="GPROTEINBRPT"/>
</dbReference>
<dbReference type="SMART" id="SM00256">
    <property type="entry name" value="FBOX"/>
    <property type="match status" value="1"/>
</dbReference>
<dbReference type="SMART" id="SM00320">
    <property type="entry name" value="WD40"/>
    <property type="match status" value="7"/>
</dbReference>
<dbReference type="SUPFAM" id="SSF81383">
    <property type="entry name" value="F-box domain"/>
    <property type="match status" value="1"/>
</dbReference>
<dbReference type="SUPFAM" id="SSF50978">
    <property type="entry name" value="WD40 repeat-like"/>
    <property type="match status" value="1"/>
</dbReference>
<dbReference type="PROSITE" id="PS50181">
    <property type="entry name" value="FBOX"/>
    <property type="match status" value="1"/>
</dbReference>
<dbReference type="PROSITE" id="PS00678">
    <property type="entry name" value="WD_REPEATS_1"/>
    <property type="match status" value="5"/>
</dbReference>
<dbReference type="PROSITE" id="PS50082">
    <property type="entry name" value="WD_REPEATS_2"/>
    <property type="match status" value="7"/>
</dbReference>
<dbReference type="PROSITE" id="PS50294">
    <property type="entry name" value="WD_REPEATS_REGION"/>
    <property type="match status" value="1"/>
</dbReference>
<comment type="function">
    <text evidence="3 4 5 7 8 9 10 11">Probable substrate recognition component of SCF (SKP1-CUL-F-box protein) E3 ubiquitin-protein ligase complex, which mediates the ubiquitination and subsequent proteasomal degradation of target proteins (PubMed:17626846). Regulates synapse elimination in early development in the motor neuron HSNL (PubMed:17626846). Cell autonomous negative regulator of lin-12/Notch-mediated signaling, with respect to lin-12 activity in cell fate decisions and tumorigenesis (PubMed:9389650). May target the intracellular domains of lin-12/Notch proteins for ubiquitin-dependent degradation (PubMed:9389650). Involved in sex determination by promoting female development (PubMed:15306688, PubMed:18718460). Potential regulator of presenilin (PubMed:9861048). May have a role in egg laying (PubMed:15306688, PubMed:8293978). Regulates zyg-1 levels (possibly redundantly with lin-23) to control centrosome duplication during mitosis (PubMed:22623721). Negatively regulates lin-45 activity and protein stability, probably by targeting it for ubiquitination and proteasomal degradation (PubMed:23154983).</text>
</comment>
<comment type="subunit">
    <text evidence="3 4 5 7 10 11">Probable component of the SCF(sel-10) E3 ubiquitin-protein ligase complex which includes skr-1 and F-box domain-containing protein sel-10 as a substrate recognition component (PubMed:17626846). Interacts with fem-1, fem-2, and fem-3 (PubMed:15306688). Interacts with the intracellular domain of glp-1 and sel-12 (PubMed:9861048). Interacts with lin-12 (PubMed:9389650). Interacts with skr-1 (PubMed:18718460). Interacts with zyg-1 (PubMed:22623721).</text>
</comment>
<comment type="interaction">
    <interactant intactId="EBI-323098">
        <id>Q93794</id>
    </interactant>
    <interactant intactId="EBI-1998155">
        <id>P17221</id>
        <label>fem-1</label>
    </interactant>
    <organismsDiffer>false</organismsDiffer>
    <experiments>2</experiments>
</comment>
<comment type="interaction">
    <interactant intactId="EBI-323098">
        <id>Q93794</id>
    </interactant>
    <interactant intactId="EBI-1998402">
        <id>P49594</id>
        <label>fem-2</label>
    </interactant>
    <organismsDiffer>false</organismsDiffer>
    <experiments>2</experiments>
</comment>
<comment type="interaction">
    <interactant intactId="EBI-323098">
        <id>Q93794</id>
    </interactant>
    <interactant intactId="EBI-445465">
        <id>P34691</id>
        <label>fem-3</label>
    </interactant>
    <organismsDiffer>false</organismsDiffer>
    <experiments>2</experiments>
</comment>
<comment type="interaction">
    <interactant intactId="EBI-323098">
        <id>Q93794</id>
    </interactant>
    <interactant intactId="EBI-326049">
        <id>P14585</id>
        <label>lin-12</label>
    </interactant>
    <organismsDiffer>false</organismsDiffer>
    <experiments>3</experiments>
</comment>
<comment type="interaction">
    <interactant intactId="EBI-323098">
        <id>Q93794</id>
    </interactant>
    <interactant intactId="EBI-323117">
        <id>G5ECU1</id>
        <label>skr-1</label>
    </interactant>
    <organismsDiffer>false</organismsDiffer>
    <experiments>5</experiments>
</comment>
<comment type="interaction">
    <interactant intactId="EBI-323098">
        <id>Q93794</id>
    </interactant>
    <interactant intactId="EBI-643670">
        <id>P31695</id>
        <label>Notch4</label>
    </interactant>
    <organismsDiffer>true</organismsDiffer>
    <experiments>2</experiments>
</comment>
<comment type="subcellular location">
    <subcellularLocation>
        <location evidence="4">Cell projection</location>
        <location evidence="4">Axon</location>
    </subcellularLocation>
    <subcellularLocation>
        <location evidence="6">Cytoplasm</location>
    </subcellularLocation>
    <text evidence="4">Expressed throughout the axon throughout development.</text>
</comment>
<comment type="alternative products">
    <event type="alternative splicing"/>
    <isoform>
        <id>Q93794-1</id>
        <name>a</name>
        <sequence type="displayed"/>
    </isoform>
    <isoform>
        <id>Q93794-2</id>
        <name>b</name>
        <sequence type="described" ref="VSP_009813"/>
    </isoform>
</comment>
<comment type="tissue specificity">
    <text evidence="6">Expressed in tail and head neurons.</text>
</comment>
<comment type="developmental stage">
    <text evidence="4 6">Expression begins at the 50-cell embryonic stage and continues throughout development (PubMed:19528325). Expressed in the HSNL motor neuron from early larval stage L4 to the young adult stage (PubMed:17626846).</text>
</comment>
<comment type="disruption phenotype">
    <text evidence="7 9">Worms show a weak masculinization phenotype (PubMed:8293978). Moreover sel-10 mutants suppress the egg laying defective (egl) phenotype of the sel-12 mutants (PubMed:8293978). RNAi-mediated knockdown results in increased zyg-1 expression at centrosomes (PubMed:22623721).</text>
</comment>
<sequence>MWPRNDVHMDDGSMTPEDQEPVTDNDMEYNDNGEESSYSNGSSSSYNADKLSSSRPLQHKLDLSASPSRNNDLNPRVEHLIALFKDLSSAEQMDAFTRLLQESNMTNIRQLRAIIEPHFQRDFLSCLPVELGMKILHNLTGYDLLKVAQVSKNWKLISEIDKIWKSLGVEEFKHHPDPTDRVTGAWQGTAIAAGVTIPDHIQPCDLNVHRFLKLQKFGDIFERAADKSRYLRADKIEKNWNANPIMGSAVLRGHEDHVITCMQIHDDVLVTGSDDNTLKVWCIDKGEVMYTLVGHTGGVWTSQISQCGRYIVSGSTDRTVKVWSTVDGSLLHTLQGHTSTVRCMAMAGSILVTGSRDTTLRVWDVESGRHLATLHGHHAAVRCVQFDGTTVVSGGYDFTVKIWNAHTGRCIRTLTGHNNRVYSLLFESERSIVCSGSLDTSIRVWDFTRPEGQECVALLQGHTSLTSGMQLRGNILVSCNADSHVRVWDIHEGTCVHMLSGHRSAITSLQWFGRNMVATSSDDGTVKLWDIERGALIRDLVTLDSGGNGGCIWRLCSTSTMLACAVGSRNNTEETKVILLDFDAVYP</sequence>
<accession>Q93794</accession>
<accession>O44083</accession>
<accession>Q95ZT0</accession>
<proteinExistence type="evidence at protein level"/>
<protein>
    <recommendedName>
        <fullName>F-box/WD repeat-containing protein sel-10</fullName>
    </recommendedName>
    <alternativeName>
        <fullName evidence="12">Egg laying defective protein 41</fullName>
    </alternativeName>
    <alternativeName>
        <fullName>Suppressor/enhancer of lin-12 protein 10</fullName>
    </alternativeName>
</protein>